<proteinExistence type="inferred from homology"/>
<accession>Q1BAQ3</accession>
<comment type="function">
    <text evidence="1">Catalyzes the isomerization between 2-isopropylmalate and 3-isopropylmalate, via the formation of 2-isopropylmaleate.</text>
</comment>
<comment type="catalytic activity">
    <reaction evidence="1">
        <text>(2R,3S)-3-isopropylmalate = (2S)-2-isopropylmalate</text>
        <dbReference type="Rhea" id="RHEA:32287"/>
        <dbReference type="ChEBI" id="CHEBI:1178"/>
        <dbReference type="ChEBI" id="CHEBI:35121"/>
        <dbReference type="EC" id="4.2.1.33"/>
    </reaction>
</comment>
<comment type="pathway">
    <text evidence="1">Amino-acid biosynthesis; L-leucine biosynthesis; L-leucine from 3-methyl-2-oxobutanoate: step 2/4.</text>
</comment>
<comment type="subunit">
    <text evidence="1">Heterodimer of LeuC and LeuD.</text>
</comment>
<comment type="similarity">
    <text evidence="1">Belongs to the LeuD family. LeuD type 1 subfamily.</text>
</comment>
<evidence type="ECO:0000255" key="1">
    <source>
        <dbReference type="HAMAP-Rule" id="MF_01031"/>
    </source>
</evidence>
<feature type="chain" id="PRO_1000063791" description="3-isopropylmalate dehydratase small subunit">
    <location>
        <begin position="1"/>
        <end position="197"/>
    </location>
</feature>
<dbReference type="EC" id="4.2.1.33" evidence="1"/>
<dbReference type="EMBL" id="CP000384">
    <property type="protein sequence ID" value="ABG08031.1"/>
    <property type="molecule type" value="Genomic_DNA"/>
</dbReference>
<dbReference type="SMR" id="Q1BAQ3"/>
<dbReference type="KEGG" id="mmc:Mmcs_1922"/>
<dbReference type="HOGENOM" id="CLU_081378_0_1_11"/>
<dbReference type="BioCyc" id="MSP164756:G1G6O-1966-MONOMER"/>
<dbReference type="UniPathway" id="UPA00048">
    <property type="reaction ID" value="UER00071"/>
</dbReference>
<dbReference type="GO" id="GO:0009316">
    <property type="term" value="C:3-isopropylmalate dehydratase complex"/>
    <property type="evidence" value="ECO:0007669"/>
    <property type="project" value="InterPro"/>
</dbReference>
<dbReference type="GO" id="GO:0003861">
    <property type="term" value="F:3-isopropylmalate dehydratase activity"/>
    <property type="evidence" value="ECO:0007669"/>
    <property type="project" value="UniProtKB-UniRule"/>
</dbReference>
<dbReference type="GO" id="GO:0009098">
    <property type="term" value="P:L-leucine biosynthetic process"/>
    <property type="evidence" value="ECO:0007669"/>
    <property type="project" value="UniProtKB-UniRule"/>
</dbReference>
<dbReference type="CDD" id="cd01577">
    <property type="entry name" value="IPMI_Swivel"/>
    <property type="match status" value="1"/>
</dbReference>
<dbReference type="FunFam" id="3.20.19.10:FF:000003">
    <property type="entry name" value="3-isopropylmalate dehydratase small subunit"/>
    <property type="match status" value="1"/>
</dbReference>
<dbReference type="Gene3D" id="3.20.19.10">
    <property type="entry name" value="Aconitase, domain 4"/>
    <property type="match status" value="1"/>
</dbReference>
<dbReference type="HAMAP" id="MF_01031">
    <property type="entry name" value="LeuD_type1"/>
    <property type="match status" value="1"/>
</dbReference>
<dbReference type="InterPro" id="IPR004431">
    <property type="entry name" value="3-IsopropMal_deHydase_ssu"/>
</dbReference>
<dbReference type="InterPro" id="IPR015928">
    <property type="entry name" value="Aconitase/3IPM_dehydase_swvl"/>
</dbReference>
<dbReference type="InterPro" id="IPR000573">
    <property type="entry name" value="AconitaseA/IPMdHydase_ssu_swvl"/>
</dbReference>
<dbReference type="InterPro" id="IPR033940">
    <property type="entry name" value="IPMI_Swivel"/>
</dbReference>
<dbReference type="InterPro" id="IPR050075">
    <property type="entry name" value="LeuD"/>
</dbReference>
<dbReference type="NCBIfam" id="TIGR00171">
    <property type="entry name" value="leuD"/>
    <property type="match status" value="1"/>
</dbReference>
<dbReference type="NCBIfam" id="NF002458">
    <property type="entry name" value="PRK01641.1"/>
    <property type="match status" value="1"/>
</dbReference>
<dbReference type="PANTHER" id="PTHR43345:SF5">
    <property type="entry name" value="3-ISOPROPYLMALATE DEHYDRATASE SMALL SUBUNIT"/>
    <property type="match status" value="1"/>
</dbReference>
<dbReference type="PANTHER" id="PTHR43345">
    <property type="entry name" value="3-ISOPROPYLMALATE DEHYDRATASE SMALL SUBUNIT 2-RELATED-RELATED"/>
    <property type="match status" value="1"/>
</dbReference>
<dbReference type="Pfam" id="PF00694">
    <property type="entry name" value="Aconitase_C"/>
    <property type="match status" value="1"/>
</dbReference>
<dbReference type="SUPFAM" id="SSF52016">
    <property type="entry name" value="LeuD/IlvD-like"/>
    <property type="match status" value="1"/>
</dbReference>
<reference key="1">
    <citation type="submission" date="2006-06" db="EMBL/GenBank/DDBJ databases">
        <title>Complete sequence of chromosome of Mycobacterium sp. MCS.</title>
        <authorList>
            <consortium name="US DOE Joint Genome Institute"/>
            <person name="Copeland A."/>
            <person name="Lucas S."/>
            <person name="Lapidus A."/>
            <person name="Barry K."/>
            <person name="Detter J.C."/>
            <person name="Glavina del Rio T."/>
            <person name="Hammon N."/>
            <person name="Israni S."/>
            <person name="Dalin E."/>
            <person name="Tice H."/>
            <person name="Pitluck S."/>
            <person name="Martinez M."/>
            <person name="Schmutz J."/>
            <person name="Larimer F."/>
            <person name="Land M."/>
            <person name="Hauser L."/>
            <person name="Kyrpides N."/>
            <person name="Kim E."/>
            <person name="Miller C.D."/>
            <person name="Hughes J.E."/>
            <person name="Anderson A.J."/>
            <person name="Sims R.C."/>
            <person name="Richardson P."/>
        </authorList>
    </citation>
    <scope>NUCLEOTIDE SEQUENCE [LARGE SCALE GENOMIC DNA]</scope>
    <source>
        <strain>MCS</strain>
    </source>
</reference>
<gene>
    <name evidence="1" type="primary">leuD</name>
    <name type="ordered locus">Mmcs_1922</name>
</gene>
<keyword id="KW-0028">Amino-acid biosynthesis</keyword>
<keyword id="KW-0100">Branched-chain amino acid biosynthesis</keyword>
<keyword id="KW-0432">Leucine biosynthesis</keyword>
<keyword id="KW-0456">Lyase</keyword>
<name>LEUD_MYCSS</name>
<sequence>MEAFRTHTGIGVPLRRSNVDTDQIIPAVYLKRVTRTGFEDGLFAAWRNDPSFVLNLPPFDRGSVLVAGPDFGTGSSREHAVWALMDYGFRVVISSRFADIFRGNAGKAGLLAAEVNQNDVELLWKLIEQNPGLEITVNLQDRNIIAGTVMVPFTIDDYTAWRLLEGLDDIGLTLRKQSEIEDYERRRPSWKPRTLPV</sequence>
<organism>
    <name type="scientific">Mycobacterium sp. (strain MCS)</name>
    <dbReference type="NCBI Taxonomy" id="164756"/>
    <lineage>
        <taxon>Bacteria</taxon>
        <taxon>Bacillati</taxon>
        <taxon>Actinomycetota</taxon>
        <taxon>Actinomycetes</taxon>
        <taxon>Mycobacteriales</taxon>
        <taxon>Mycobacteriaceae</taxon>
        <taxon>Mycobacterium</taxon>
    </lineage>
</organism>
<protein>
    <recommendedName>
        <fullName evidence="1">3-isopropylmalate dehydratase small subunit</fullName>
        <ecNumber evidence="1">4.2.1.33</ecNumber>
    </recommendedName>
    <alternativeName>
        <fullName evidence="1">Alpha-IPM isomerase</fullName>
        <shortName evidence="1">IPMI</shortName>
    </alternativeName>
    <alternativeName>
        <fullName evidence="1">Isopropylmalate isomerase</fullName>
    </alternativeName>
</protein>